<evidence type="ECO:0000250" key="1">
    <source>
        <dbReference type="UniProtKB" id="P35259"/>
    </source>
</evidence>
<evidence type="ECO:0000250" key="2">
    <source>
        <dbReference type="UniProtKB" id="Q6UY68"/>
    </source>
</evidence>
<evidence type="ECO:0000255" key="3"/>
<evidence type="ECO:0000255" key="4">
    <source>
        <dbReference type="PROSITE-ProRule" id="PRU01071"/>
    </source>
</evidence>
<evidence type="ECO:0000305" key="5"/>
<gene>
    <name type="primary">VP35</name>
</gene>
<organismHost>
    <name type="scientific">Chlorocebus aethiops</name>
    <name type="common">Green monkey</name>
    <name type="synonym">Cercopithecus aethiops</name>
    <dbReference type="NCBI Taxonomy" id="9534"/>
</organismHost>
<organismHost>
    <name type="scientific">Homo sapiens</name>
    <name type="common">Human</name>
    <dbReference type="NCBI Taxonomy" id="9606"/>
</organismHost>
<organismHost>
    <name type="scientific">Rousettus aegyptiacus</name>
    <name type="common">Egyptian fruit bat</name>
    <name type="synonym">Pteropus aegyptiacus</name>
    <dbReference type="NCBI Taxonomy" id="9407"/>
</organismHost>
<keyword id="KW-0175">Coiled coil</keyword>
<keyword id="KW-1035">Host cytoplasm</keyword>
<keyword id="KW-0804">Transcription</keyword>
<keyword id="KW-0693">Viral RNA replication</keyword>
<keyword id="KW-0946">Virion</keyword>
<sequence>MWDSSYMQQVSEGLMTGKVPIDQVFGTNPLEKLYKRRKPKGTVGLQCSPCLISKSTSTDDIVWDQLIVKKTLADLLIPINRQMSDIQSTLSEMTTKVHEIERQLHDITPVVKMGKTLEAISKGMSEMLAKYDHLVISTGRTTAPAAAFDAYLNEHGVPPPQPAIFKDLGVAQQAYSQKTMVKNQTTDAADKMSKVLELSEETFSKPNLSAKDLALLLFTHLPGNNTPFHILAQVLSKIAYKSGKSGAFLDAFHQILSEGENAQAALTRLSRTFDAFLGAVPPVIKVKNFQTVPRPCQKSLRAVPPNPTIDKGWVCVYSSEQGETRALKI</sequence>
<protein>
    <recommendedName>
        <fullName>Polymerase cofactor VP35</fullName>
    </recommendedName>
    <alternativeName>
        <fullName>Marburg VP35</fullName>
        <shortName>mVP35</shortName>
    </alternativeName>
</protein>
<proteinExistence type="inferred from homology"/>
<dbReference type="EMBL" id="AF005731">
    <property type="protein sequence ID" value="AAC40456.1"/>
    <property type="molecule type" value="Genomic_RNA"/>
</dbReference>
<dbReference type="EMBL" id="DQ447649">
    <property type="protein sequence ID" value="ABE27069.1"/>
    <property type="molecule type" value="Genomic_RNA"/>
</dbReference>
<dbReference type="SMR" id="Q1PDC9"/>
<dbReference type="Proteomes" id="UP000008239">
    <property type="component" value="Genome"/>
</dbReference>
<dbReference type="GO" id="GO:0030430">
    <property type="term" value="C:host cell cytoplasm"/>
    <property type="evidence" value="ECO:0007669"/>
    <property type="project" value="UniProtKB-SubCell"/>
</dbReference>
<dbReference type="GO" id="GO:0044423">
    <property type="term" value="C:virion component"/>
    <property type="evidence" value="ECO:0007669"/>
    <property type="project" value="UniProtKB-KW"/>
</dbReference>
<dbReference type="CDD" id="cd21030">
    <property type="entry name" value="V35-RBD_P-protein-C_like"/>
    <property type="match status" value="1"/>
</dbReference>
<dbReference type="FunFam" id="2.10.10.70:FF:000001">
    <property type="entry name" value="Polymerase cofactor VP35"/>
    <property type="match status" value="1"/>
</dbReference>
<dbReference type="Gene3D" id="2.10.10.70">
    <property type="entry name" value="Filoviridae VP35, C-terminal inhibitory domain, beta-sheet subdomain"/>
    <property type="match status" value="1"/>
</dbReference>
<dbReference type="Gene3D" id="1.10.8.950">
    <property type="entry name" value="Filoviridae VP35, C-terminal inhibitory domain, helical subdomain"/>
    <property type="match status" value="1"/>
</dbReference>
<dbReference type="InterPro" id="IPR002953">
    <property type="entry name" value="Filo_VP35"/>
</dbReference>
<dbReference type="InterPro" id="IPR031163">
    <property type="entry name" value="VP35_IID"/>
</dbReference>
<dbReference type="InterPro" id="IPR043061">
    <property type="entry name" value="VP35_IID_b-sht"/>
</dbReference>
<dbReference type="InterPro" id="IPR043060">
    <property type="entry name" value="VP35_IID_hlx"/>
</dbReference>
<dbReference type="Pfam" id="PF02097">
    <property type="entry name" value="Filo_VP35"/>
    <property type="match status" value="1"/>
</dbReference>
<dbReference type="PIRSF" id="PIRSF018326">
    <property type="entry name" value="VP35_FiloV"/>
    <property type="match status" value="1"/>
</dbReference>
<dbReference type="PRINTS" id="PR01240">
    <property type="entry name" value="FILOVP35"/>
</dbReference>
<dbReference type="PROSITE" id="PS51735">
    <property type="entry name" value="VP35_IID"/>
    <property type="match status" value="1"/>
</dbReference>
<feature type="chain" id="PRO_0000314997" description="Polymerase cofactor VP35">
    <location>
        <begin position="1"/>
        <end position="329"/>
    </location>
</feature>
<feature type="domain" description="VP35 IID" evidence="4">
    <location>
        <begin position="204"/>
        <end position="329"/>
    </location>
</feature>
<feature type="coiled-coil region" evidence="3">
    <location>
        <begin position="70"/>
        <end position="120"/>
    </location>
</feature>
<feature type="sequence variant" description="In strain: Isolate Sanchez.">
    <original>T</original>
    <variation>P</variation>
    <location>
        <position position="42"/>
    </location>
</feature>
<name>VP35_MABVR</name>
<organism>
    <name type="scientific">Lake Victoria marburgvirus (strain Ravn-87)</name>
    <name type="common">MARV</name>
    <name type="synonym">Marburg virus (strain Kenya/Ravn/1987)</name>
    <dbReference type="NCBI Taxonomy" id="378809"/>
    <lineage>
        <taxon>Viruses</taxon>
        <taxon>Riboviria</taxon>
        <taxon>Orthornavirae</taxon>
        <taxon>Negarnaviricota</taxon>
        <taxon>Haploviricotina</taxon>
        <taxon>Monjiviricetes</taxon>
        <taxon>Mononegavirales</taxon>
        <taxon>Filoviridae</taxon>
        <taxon>Orthomarburgvirus</taxon>
        <taxon>Orthomarburgvirus marburgense</taxon>
    </lineage>
</organism>
<reference key="1">
    <citation type="journal article" date="1998" name="Virology">
        <title>Variation in the glycoprotein and VP35 genes of Marburg virus strains.</title>
        <authorList>
            <person name="Sanchez A."/>
            <person name="Trappier S.G."/>
            <person name="Stroeher U."/>
            <person name="Nichol S.T."/>
            <person name="Bowen M.D."/>
            <person name="Feldmann H."/>
        </authorList>
    </citation>
    <scope>NUCLEOTIDE SEQUENCE [GENOMIC RNA]</scope>
</reference>
<reference key="2">
    <citation type="journal article" date="2006" name="J. Virol.">
        <title>Marburgvirus genomics and association with a large hemorrhagic fever outbreak in Angola.</title>
        <authorList>
            <person name="Towner J.S."/>
            <person name="Khristova M.L."/>
            <person name="Sealy T.K."/>
            <person name="Vincent M.J."/>
            <person name="Erickson B.R."/>
            <person name="Bawiec D.A."/>
            <person name="Hartman A.L."/>
            <person name="Comer J.A."/>
            <person name="Zaki S.R."/>
            <person name="Stroeher U."/>
            <person name="Gomes da Silva F."/>
            <person name="del Castillo F."/>
            <person name="Rollin P.E."/>
            <person name="Ksiazek T.G."/>
            <person name="Nichol S.T."/>
        </authorList>
    </citation>
    <scope>NUCLEOTIDE SEQUENCE [GENOMIC RNA]</scope>
</reference>
<comment type="function">
    <text evidence="1">Plays an essential role in viral RNA synthesis and also a role in suppressing innate immune signaling.</text>
</comment>
<comment type="subunit">
    <text evidence="1 2">Homooligomer. Homomultimerization via the coiled coil domain is a prerequisite for binding to L. Found in a trimeric complex in which VP35 bridges L and the nucleoprotein (By similarity). Interacts with NP (By similarity). Disrupts innate immune signaling in infected host cell (By similarity).</text>
</comment>
<comment type="subcellular location">
    <subcellularLocation>
        <location evidence="1">Virion</location>
    </subcellularLocation>
    <subcellularLocation>
        <location evidence="1">Host cytoplasm</location>
    </subcellularLocation>
</comment>
<comment type="similarity">
    <text evidence="4 5">Belongs to the filoviridae polymerase cofactor VP35 family.</text>
</comment>
<accession>Q1PDC9</accession>
<accession>O36426</accession>